<gene>
    <name type="primary">rps7-A</name>
</gene>
<gene>
    <name type="primary">rps7-B</name>
</gene>
<evidence type="ECO:0000250" key="1"/>
<evidence type="ECO:0000255" key="2">
    <source>
        <dbReference type="HAMAP-Rule" id="MF_00480"/>
    </source>
</evidence>
<evidence type="ECO:0000305" key="3"/>
<comment type="function">
    <text evidence="1">One of the primary rRNA binding proteins, it binds directly to 16S rRNA where it nucleates assembly of the head domain of the 30S subunit.</text>
</comment>
<comment type="subunit">
    <text>Part of the 30S ribosomal subunit.</text>
</comment>
<comment type="subcellular location">
    <subcellularLocation>
        <location>Plastid</location>
        <location>Chloroplast</location>
    </subcellularLocation>
</comment>
<comment type="similarity">
    <text evidence="3">Belongs to the universal ribosomal protein uS7 family.</text>
</comment>
<keyword id="KW-0150">Chloroplast</keyword>
<keyword id="KW-0934">Plastid</keyword>
<keyword id="KW-0687">Ribonucleoprotein</keyword>
<keyword id="KW-0689">Ribosomal protein</keyword>
<keyword id="KW-0694">RNA-binding</keyword>
<keyword id="KW-0699">rRNA-binding</keyword>
<protein>
    <recommendedName>
        <fullName evidence="2">Small ribosomal subunit protein uS7cz/uS7cy</fullName>
    </recommendedName>
    <alternativeName>
        <fullName>30S ribosomal protein S7, chloroplastic</fullName>
    </alternativeName>
</protein>
<sequence>MSRRGTAEEKTAKSDPIYRNRLVNMLVNRILKHGKKSLAYQIIYRAVKKIQQKTETNPLSVLRQAIRGVTPDIAVKSRRVGGSTHQVPVEIGSTQGKALAIRWLLGASRKRPGRNMAFKLSSELVDAAKGSGDAIRKKEETHRMAEANRAFAHFR</sequence>
<geneLocation type="chloroplast"/>
<dbReference type="EMBL" id="AF123775">
    <property type="protein sequence ID" value="AAG26104.1"/>
    <property type="molecule type" value="Genomic_DNA"/>
</dbReference>
<dbReference type="EMBL" id="EF614270">
    <property type="protein sequence ID" value="ABQ81497.1"/>
    <property type="molecule type" value="Genomic_DNA"/>
</dbReference>
<dbReference type="EMBL" id="EF614270">
    <property type="protein sequence ID" value="ABQ81510.1"/>
    <property type="molecule type" value="Genomic_DNA"/>
</dbReference>
<dbReference type="SMR" id="Q9GFM3"/>
<dbReference type="GO" id="GO:0009507">
    <property type="term" value="C:chloroplast"/>
    <property type="evidence" value="ECO:0007669"/>
    <property type="project" value="UniProtKB-SubCell"/>
</dbReference>
<dbReference type="GO" id="GO:0015935">
    <property type="term" value="C:small ribosomal subunit"/>
    <property type="evidence" value="ECO:0007669"/>
    <property type="project" value="InterPro"/>
</dbReference>
<dbReference type="GO" id="GO:0019843">
    <property type="term" value="F:rRNA binding"/>
    <property type="evidence" value="ECO:0007669"/>
    <property type="project" value="UniProtKB-UniRule"/>
</dbReference>
<dbReference type="GO" id="GO:0003735">
    <property type="term" value="F:structural constituent of ribosome"/>
    <property type="evidence" value="ECO:0007669"/>
    <property type="project" value="InterPro"/>
</dbReference>
<dbReference type="GO" id="GO:0006412">
    <property type="term" value="P:translation"/>
    <property type="evidence" value="ECO:0007669"/>
    <property type="project" value="UniProtKB-UniRule"/>
</dbReference>
<dbReference type="CDD" id="cd14871">
    <property type="entry name" value="uS7_Chloroplast"/>
    <property type="match status" value="1"/>
</dbReference>
<dbReference type="FunFam" id="1.10.455.10:FF:000001">
    <property type="entry name" value="30S ribosomal protein S7"/>
    <property type="match status" value="1"/>
</dbReference>
<dbReference type="Gene3D" id="1.10.455.10">
    <property type="entry name" value="Ribosomal protein S7 domain"/>
    <property type="match status" value="1"/>
</dbReference>
<dbReference type="HAMAP" id="MF_00480_B">
    <property type="entry name" value="Ribosomal_uS7_B"/>
    <property type="match status" value="1"/>
</dbReference>
<dbReference type="InterPro" id="IPR000235">
    <property type="entry name" value="Ribosomal_uS7"/>
</dbReference>
<dbReference type="InterPro" id="IPR005717">
    <property type="entry name" value="Ribosomal_uS7_bac/org-type"/>
</dbReference>
<dbReference type="InterPro" id="IPR020606">
    <property type="entry name" value="Ribosomal_uS7_CS"/>
</dbReference>
<dbReference type="InterPro" id="IPR023798">
    <property type="entry name" value="Ribosomal_uS7_dom"/>
</dbReference>
<dbReference type="InterPro" id="IPR036823">
    <property type="entry name" value="Ribosomal_uS7_dom_sf"/>
</dbReference>
<dbReference type="NCBIfam" id="TIGR01029">
    <property type="entry name" value="rpsG_bact"/>
    <property type="match status" value="1"/>
</dbReference>
<dbReference type="PANTHER" id="PTHR11205">
    <property type="entry name" value="RIBOSOMAL PROTEIN S7"/>
    <property type="match status" value="1"/>
</dbReference>
<dbReference type="Pfam" id="PF00177">
    <property type="entry name" value="Ribosomal_S7"/>
    <property type="match status" value="1"/>
</dbReference>
<dbReference type="PIRSF" id="PIRSF002122">
    <property type="entry name" value="RPS7p_RPS7a_RPS5e_RPS7o"/>
    <property type="match status" value="1"/>
</dbReference>
<dbReference type="SUPFAM" id="SSF47973">
    <property type="entry name" value="Ribosomal protein S7"/>
    <property type="match status" value="1"/>
</dbReference>
<dbReference type="PROSITE" id="PS00052">
    <property type="entry name" value="RIBOSOMAL_S7"/>
    <property type="match status" value="1"/>
</dbReference>
<proteinExistence type="inferred from homology"/>
<reference key="1">
    <citation type="journal article" date="2000" name="Am. J. Bot.">
        <title>Utility of 17 chloroplast genes for inferring the phylogeny of the basal angiosperms.</title>
        <authorList>
            <person name="Graham S.W."/>
            <person name="Olmstead R.G."/>
        </authorList>
    </citation>
    <scope>NUCLEOTIDE SEQUENCE [GENOMIC DNA]</scope>
</reference>
<reference key="2">
    <citation type="journal article" date="2007" name="Proc. Natl. Acad. Sci. U.S.A.">
        <title>Using plastid genome-scale data to resolve enigmatic relationships among basal angiosperms.</title>
        <authorList>
            <person name="Moore M.J."/>
            <person name="Bell C.D."/>
            <person name="Soltis P.S."/>
            <person name="Soltis D.E."/>
        </authorList>
    </citation>
    <scope>NUCLEOTIDE SEQUENCE [LARGE SCALE GENOMIC DNA]</scope>
</reference>
<feature type="chain" id="PRO_0000124440" description="Small ribosomal subunit protein uS7cz/uS7cy">
    <location>
        <begin position="1"/>
        <end position="155"/>
    </location>
</feature>
<accession>Q9GFM3</accession>
<accession>A8SEE9</accession>
<name>RR7_CERDE</name>
<organism>
    <name type="scientific">Ceratophyllum demersum</name>
    <name type="common">Rigid hornwort</name>
    <name type="synonym">Coontail</name>
    <dbReference type="NCBI Taxonomy" id="4428"/>
    <lineage>
        <taxon>Eukaryota</taxon>
        <taxon>Viridiplantae</taxon>
        <taxon>Streptophyta</taxon>
        <taxon>Embryophyta</taxon>
        <taxon>Tracheophyta</taxon>
        <taxon>Spermatophyta</taxon>
        <taxon>Magnoliopsida</taxon>
        <taxon>Ceratophyllales</taxon>
        <taxon>Ceratophyllaceae</taxon>
        <taxon>Ceratophyllum</taxon>
    </lineage>
</organism>